<organism>
    <name type="scientific">Mus musculus</name>
    <name type="common">Mouse</name>
    <dbReference type="NCBI Taxonomy" id="10090"/>
    <lineage>
        <taxon>Eukaryota</taxon>
        <taxon>Metazoa</taxon>
        <taxon>Chordata</taxon>
        <taxon>Craniata</taxon>
        <taxon>Vertebrata</taxon>
        <taxon>Euteleostomi</taxon>
        <taxon>Mammalia</taxon>
        <taxon>Eutheria</taxon>
        <taxon>Euarchontoglires</taxon>
        <taxon>Glires</taxon>
        <taxon>Rodentia</taxon>
        <taxon>Myomorpha</taxon>
        <taxon>Muroidea</taxon>
        <taxon>Muridae</taxon>
        <taxon>Murinae</taxon>
        <taxon>Mus</taxon>
        <taxon>Mus</taxon>
    </lineage>
</organism>
<sequence length="183" mass="20642">MREYKVVVLGSGGVGKSALTVQFVTGTFIEKYDPTIEDFYRKEIEVDSSPSVLEILDTAGTEQFASMRDLYIKNGQGFILVYSLVNQQSFQDIKPMRDQIIRVKRYEKVPVILVGNKVDLESEREVSSNEGRALAEEWGCPFMETSAKSKTMVDELFAEIVRQMNYAAQPDKDDPCCSACNIQ</sequence>
<reference key="1">
    <citation type="journal article" date="2005" name="Science">
        <title>The transcriptional landscape of the mammalian genome.</title>
        <authorList>
            <person name="Carninci P."/>
            <person name="Kasukawa T."/>
            <person name="Katayama S."/>
            <person name="Gough J."/>
            <person name="Frith M.C."/>
            <person name="Maeda N."/>
            <person name="Oyama R."/>
            <person name="Ravasi T."/>
            <person name="Lenhard B."/>
            <person name="Wells C."/>
            <person name="Kodzius R."/>
            <person name="Shimokawa K."/>
            <person name="Bajic V.B."/>
            <person name="Brenner S.E."/>
            <person name="Batalov S."/>
            <person name="Forrest A.R."/>
            <person name="Zavolan M."/>
            <person name="Davis M.J."/>
            <person name="Wilming L.G."/>
            <person name="Aidinis V."/>
            <person name="Allen J.E."/>
            <person name="Ambesi-Impiombato A."/>
            <person name="Apweiler R."/>
            <person name="Aturaliya R.N."/>
            <person name="Bailey T.L."/>
            <person name="Bansal M."/>
            <person name="Baxter L."/>
            <person name="Beisel K.W."/>
            <person name="Bersano T."/>
            <person name="Bono H."/>
            <person name="Chalk A.M."/>
            <person name="Chiu K.P."/>
            <person name="Choudhary V."/>
            <person name="Christoffels A."/>
            <person name="Clutterbuck D.R."/>
            <person name="Crowe M.L."/>
            <person name="Dalla E."/>
            <person name="Dalrymple B.P."/>
            <person name="de Bono B."/>
            <person name="Della Gatta G."/>
            <person name="di Bernardo D."/>
            <person name="Down T."/>
            <person name="Engstrom P."/>
            <person name="Fagiolini M."/>
            <person name="Faulkner G."/>
            <person name="Fletcher C.F."/>
            <person name="Fukushima T."/>
            <person name="Furuno M."/>
            <person name="Futaki S."/>
            <person name="Gariboldi M."/>
            <person name="Georgii-Hemming P."/>
            <person name="Gingeras T.R."/>
            <person name="Gojobori T."/>
            <person name="Green R.E."/>
            <person name="Gustincich S."/>
            <person name="Harbers M."/>
            <person name="Hayashi Y."/>
            <person name="Hensch T.K."/>
            <person name="Hirokawa N."/>
            <person name="Hill D."/>
            <person name="Huminiecki L."/>
            <person name="Iacono M."/>
            <person name="Ikeo K."/>
            <person name="Iwama A."/>
            <person name="Ishikawa T."/>
            <person name="Jakt M."/>
            <person name="Kanapin A."/>
            <person name="Katoh M."/>
            <person name="Kawasawa Y."/>
            <person name="Kelso J."/>
            <person name="Kitamura H."/>
            <person name="Kitano H."/>
            <person name="Kollias G."/>
            <person name="Krishnan S.P."/>
            <person name="Kruger A."/>
            <person name="Kummerfeld S.K."/>
            <person name="Kurochkin I.V."/>
            <person name="Lareau L.F."/>
            <person name="Lazarevic D."/>
            <person name="Lipovich L."/>
            <person name="Liu J."/>
            <person name="Liuni S."/>
            <person name="McWilliam S."/>
            <person name="Madan Babu M."/>
            <person name="Madera M."/>
            <person name="Marchionni L."/>
            <person name="Matsuda H."/>
            <person name="Matsuzawa S."/>
            <person name="Miki H."/>
            <person name="Mignone F."/>
            <person name="Miyake S."/>
            <person name="Morris K."/>
            <person name="Mottagui-Tabar S."/>
            <person name="Mulder N."/>
            <person name="Nakano N."/>
            <person name="Nakauchi H."/>
            <person name="Ng P."/>
            <person name="Nilsson R."/>
            <person name="Nishiguchi S."/>
            <person name="Nishikawa S."/>
            <person name="Nori F."/>
            <person name="Ohara O."/>
            <person name="Okazaki Y."/>
            <person name="Orlando V."/>
            <person name="Pang K.C."/>
            <person name="Pavan W.J."/>
            <person name="Pavesi G."/>
            <person name="Pesole G."/>
            <person name="Petrovsky N."/>
            <person name="Piazza S."/>
            <person name="Reed J."/>
            <person name="Reid J.F."/>
            <person name="Ring B.Z."/>
            <person name="Ringwald M."/>
            <person name="Rost B."/>
            <person name="Ruan Y."/>
            <person name="Salzberg S.L."/>
            <person name="Sandelin A."/>
            <person name="Schneider C."/>
            <person name="Schoenbach C."/>
            <person name="Sekiguchi K."/>
            <person name="Semple C.A."/>
            <person name="Seno S."/>
            <person name="Sessa L."/>
            <person name="Sheng Y."/>
            <person name="Shibata Y."/>
            <person name="Shimada H."/>
            <person name="Shimada K."/>
            <person name="Silva D."/>
            <person name="Sinclair B."/>
            <person name="Sperling S."/>
            <person name="Stupka E."/>
            <person name="Sugiura K."/>
            <person name="Sultana R."/>
            <person name="Takenaka Y."/>
            <person name="Taki K."/>
            <person name="Tammoja K."/>
            <person name="Tan S.L."/>
            <person name="Tang S."/>
            <person name="Taylor M.S."/>
            <person name="Tegner J."/>
            <person name="Teichmann S.A."/>
            <person name="Ueda H.R."/>
            <person name="van Nimwegen E."/>
            <person name="Verardo R."/>
            <person name="Wei C.L."/>
            <person name="Yagi K."/>
            <person name="Yamanishi H."/>
            <person name="Zabarovsky E."/>
            <person name="Zhu S."/>
            <person name="Zimmer A."/>
            <person name="Hide W."/>
            <person name="Bult C."/>
            <person name="Grimmond S.M."/>
            <person name="Teasdale R.D."/>
            <person name="Liu E.T."/>
            <person name="Brusic V."/>
            <person name="Quackenbush J."/>
            <person name="Wahlestedt C."/>
            <person name="Mattick J.S."/>
            <person name="Hume D.A."/>
            <person name="Kai C."/>
            <person name="Sasaki D."/>
            <person name="Tomaru Y."/>
            <person name="Fukuda S."/>
            <person name="Kanamori-Katayama M."/>
            <person name="Suzuki M."/>
            <person name="Aoki J."/>
            <person name="Arakawa T."/>
            <person name="Iida J."/>
            <person name="Imamura K."/>
            <person name="Itoh M."/>
            <person name="Kato T."/>
            <person name="Kawaji H."/>
            <person name="Kawagashira N."/>
            <person name="Kawashima T."/>
            <person name="Kojima M."/>
            <person name="Kondo S."/>
            <person name="Konno H."/>
            <person name="Nakano K."/>
            <person name="Ninomiya N."/>
            <person name="Nishio T."/>
            <person name="Okada M."/>
            <person name="Plessy C."/>
            <person name="Shibata K."/>
            <person name="Shiraki T."/>
            <person name="Suzuki S."/>
            <person name="Tagami M."/>
            <person name="Waki K."/>
            <person name="Watahiki A."/>
            <person name="Okamura-Oho Y."/>
            <person name="Suzuki H."/>
            <person name="Kawai J."/>
            <person name="Hayashizaki Y."/>
        </authorList>
    </citation>
    <scope>NUCLEOTIDE SEQUENCE [LARGE SCALE MRNA] (ISOFORMS 1 AND 2)</scope>
    <source>
        <strain>C57BL/6J</strain>
        <tissue>Adipose tissue</tissue>
        <tissue>Thymus</tissue>
    </source>
</reference>
<reference key="2">
    <citation type="journal article" date="2004" name="Genome Res.">
        <title>The status, quality, and expansion of the NIH full-length cDNA project: the Mammalian Gene Collection (MGC).</title>
        <authorList>
            <consortium name="The MGC Project Team"/>
        </authorList>
    </citation>
    <scope>NUCLEOTIDE SEQUENCE [LARGE SCALE MRNA] (ISOFORM 1)</scope>
    <source>
        <strain>C57BL/6J</strain>
        <tissue>Brain</tissue>
    </source>
</reference>
<reference key="3">
    <citation type="submission" date="2007-04" db="UniProtKB">
        <authorList>
            <person name="Lubec G."/>
            <person name="Kang S.U."/>
        </authorList>
    </citation>
    <scope>PROTEIN SEQUENCE OF 6-16; 109-124 AND 151-162</scope>
    <scope>IDENTIFICATION BY MASS SPECTROMETRY</scope>
    <source>
        <strain>C57BL/6J</strain>
        <tissue>Brain</tissue>
    </source>
</reference>
<reference key="4">
    <citation type="journal article" date="1998" name="Eur. J. Biochem.">
        <title>Identification of a specific effector of the small GTP-binding protein Rap2.</title>
        <authorList>
            <person name="Janoueix-Lerosey I."/>
            <person name="Pasheva E."/>
            <person name="de Tand M.-F."/>
            <person name="Tavitian A."/>
            <person name="de Gunzburg J."/>
        </authorList>
    </citation>
    <scope>INTERACTION WITH RUNDC3A</scope>
    <scope>DOMAIN</scope>
    <scope>MUTAGENESIS OF SER-17 AND THR-35</scope>
</reference>
<reference key="5">
    <citation type="journal article" date="2000" name="Biochem. J.">
        <title>RGS14 is a novel Rap effector that preferentially regulates the GTPase activity of galphao.</title>
        <authorList>
            <person name="Traver S."/>
            <person name="Bidot C."/>
            <person name="Spassky N."/>
            <person name="Baltauss T."/>
            <person name="De Tand M.F."/>
            <person name="Thomas J.L."/>
            <person name="Zalc B."/>
            <person name="Janoueix-Lerosey I."/>
            <person name="Gunzburg J.D."/>
        </authorList>
    </citation>
    <scope>INTERACTION WITH RGS14</scope>
    <scope>TISSUE SPECIFICITY</scope>
</reference>
<reference key="6">
    <citation type="journal article" date="2002" name="J. Immunol.">
        <title>The Rap GTPases regulate B cell migration toward the chemokine stromal cell-derived factor-1 (CXCL12): potential role for Rap2 in promoting B cell migration.</title>
        <authorList>
            <person name="McLeod S.J."/>
            <person name="Li A.H."/>
            <person name="Lee R.L."/>
            <person name="Burgess A.E."/>
            <person name="Gold M.R."/>
        </authorList>
    </citation>
    <scope>FUNCTION</scope>
</reference>
<reference key="7">
    <citation type="journal article" date="2008" name="J. Neurosci.">
        <title>Constitutively active Rap2 transgenic mice display fewer dendritic spines, reduced extracellular signal-regulated kinase signaling, enhanced long-term depression, and impaired spatial learning and fear extinction.</title>
        <authorList>
            <person name="Ryu J."/>
            <person name="Futai K."/>
            <person name="Feliu M."/>
            <person name="Weinberg R."/>
            <person name="Sheng M."/>
        </authorList>
    </citation>
    <scope>FUNCTION</scope>
    <scope>TRANSGENIC MICE</scope>
</reference>
<reference key="8">
    <citation type="journal article" date="2009" name="Biochem. Biophys. Res. Commun.">
        <title>Rap2 function requires palmitoylation and recycling endosome localization.</title>
        <authorList>
            <person name="Uechi Y."/>
            <person name="Bayarjargal M."/>
            <person name="Umikawa M."/>
            <person name="Oshiro M."/>
            <person name="Takei K."/>
            <person name="Yamashiro Y."/>
            <person name="Asato T."/>
            <person name="Endo S."/>
            <person name="Misaki R."/>
            <person name="Taguchi T."/>
            <person name="Kariya K."/>
        </authorList>
    </citation>
    <scope>FUNCTION</scope>
    <scope>SUBCELLULAR LOCATION</scope>
    <scope>ISOPRENYLATION AT CYS-180</scope>
    <scope>METHYLATION AT CYS-180</scope>
    <scope>PALMITOYLATION AT CYS-176 AND CYS-177</scope>
    <scope>MUTAGENESIS OF CYS-176; CYS-177 AND CYS-180</scope>
</reference>
<reference key="9">
    <citation type="journal article" date="2010" name="Cell">
        <title>A tissue-specific atlas of mouse protein phosphorylation and expression.</title>
        <authorList>
            <person name="Huttlin E.L."/>
            <person name="Jedrychowski M.P."/>
            <person name="Elias J.E."/>
            <person name="Goswami T."/>
            <person name="Rad R."/>
            <person name="Beausoleil S.A."/>
            <person name="Villen J."/>
            <person name="Haas W."/>
            <person name="Sowa M.E."/>
            <person name="Gygi S.P."/>
        </authorList>
    </citation>
    <scope>IDENTIFICATION BY MASS SPECTROMETRY [LARGE SCALE ANALYSIS]</scope>
    <source>
        <tissue>Brain</tissue>
        <tissue>Liver</tissue>
        <tissue>Lung</tissue>
        <tissue>Spleen</tissue>
    </source>
</reference>
<reference key="10">
    <citation type="journal article" date="2010" name="Neuron">
        <title>Regulation of Rap2A by the ubiquitin ligase Nedd4-1 controls neurite development.</title>
        <authorList>
            <person name="Kawabe H."/>
            <person name="Neeb A."/>
            <person name="Dimova K."/>
            <person name="Young S.M. Jr."/>
            <person name="Takeda M."/>
            <person name="Katsurabayashi S."/>
            <person name="Mitkovski M."/>
            <person name="Malakhova O.A."/>
            <person name="Zhang D.E."/>
            <person name="Umikawa M."/>
            <person name="Kariya K."/>
            <person name="Goebbels S."/>
            <person name="Nave K.A."/>
            <person name="Rosenmund C."/>
            <person name="Jahn O."/>
            <person name="Rhee J."/>
            <person name="Brose N."/>
        </authorList>
    </citation>
    <scope>INTERACTION WITH NEDD4 AND TNIK</scope>
    <scope>UBIQUITINATION BY NEDD4</scope>
</reference>
<proteinExistence type="evidence at protein level"/>
<keyword id="KW-0025">Alternative splicing</keyword>
<keyword id="KW-1003">Cell membrane</keyword>
<keyword id="KW-0966">Cell projection</keyword>
<keyword id="KW-0903">Direct protein sequencing</keyword>
<keyword id="KW-0967">Endosome</keyword>
<keyword id="KW-0333">Golgi apparatus</keyword>
<keyword id="KW-0342">GTP-binding</keyword>
<keyword id="KW-0378">Hydrolase</keyword>
<keyword id="KW-0449">Lipoprotein</keyword>
<keyword id="KW-0458">Lysosome</keyword>
<keyword id="KW-0472">Membrane</keyword>
<keyword id="KW-0488">Methylation</keyword>
<keyword id="KW-0547">Nucleotide-binding</keyword>
<keyword id="KW-0564">Palmitate</keyword>
<keyword id="KW-0636">Prenylation</keyword>
<keyword id="KW-1185">Reference proteome</keyword>
<keyword id="KW-0832">Ubl conjugation</keyword>
<comment type="function">
    <text evidence="4 5 6">Small GTP-binding protein which cycles between a GDP-bound inactive and a GTP-bound active form. In its active form interacts with and regulates several effectors including MAP4K4, MINK1 and TNIK. Part of a signaling complex composed of NEDD4, RAP2A and TNIK which regulates neuronal dendrite extension and arborization during development. More generally, it is part of several signaling cascades and may regulate cytoskeletal rearrangements, cell migration, cell adhesion and cell spreading.</text>
</comment>
<comment type="catalytic activity">
    <reaction evidence="2">
        <text>GTP + H2O = GDP + phosphate + H(+)</text>
        <dbReference type="Rhea" id="RHEA:19669"/>
        <dbReference type="ChEBI" id="CHEBI:15377"/>
        <dbReference type="ChEBI" id="CHEBI:15378"/>
        <dbReference type="ChEBI" id="CHEBI:37565"/>
        <dbReference type="ChEBI" id="CHEBI:43474"/>
        <dbReference type="ChEBI" id="CHEBI:58189"/>
        <dbReference type="EC" id="3.6.5.2"/>
    </reaction>
</comment>
<comment type="activity regulation">
    <text evidence="2">Activated by the guanine nucleotide-exchange factors RAPGEF3 and RAPGEF4 in a cAMP-dependent manner. Nucleotide exchange is also specifically stimulated by RAPGEF5, RASGEF1A and RASGEF1B.</text>
</comment>
<comment type="subunit">
    <text evidence="2 3 7 8">Interacts with PLCE1. Interacts with ARHGAP29, SGSM1, SGSM2 and SGSM3. Interacts (GTP-bound form preferentially) with MAP4K4. Interacts with MINK1. Interacts with cytoskeletal actin (By similarity). Interacts (GTP-bound form) with RUNDC3A. Interacts (GTP-bound form preferentially) with TNIK (via the CNH domain); the interaction is direct and recruits RAP2A to the E3 ubiquitin ligase NEDD4. Interacts with RGS14; the interaction is GTP-dependent.</text>
</comment>
<comment type="subcellular location">
    <subcellularLocation>
        <location evidence="2">Midbody</location>
    </subcellularLocation>
    <subcellularLocation>
        <location evidence="2">Cell projection</location>
        <location evidence="2">Lamellipodium membrane</location>
    </subcellularLocation>
    <subcellularLocation>
        <location evidence="2">Golgi apparatus</location>
    </subcellularLocation>
    <subcellularLocation>
        <location evidence="6">Recycling endosome membrane</location>
        <topology evidence="6">Lipid-anchor</topology>
        <orientation evidence="6">Cytoplasmic side</orientation>
    </subcellularLocation>
    <subcellularLocation>
        <location evidence="2">Lysosome</location>
    </subcellularLocation>
    <text evidence="2">Localized to the Golgi. May also localize to the gelatinase-containing granules of neutrophils. Colocalized with RASGEF1B to midbody at telophase. Localized predominantly to the plasma membrane, where it is enriched at lamellipodia ruffles. Cycles between the lamellipodia plasma membrane and endosomes when ubiquitinated by the ECS(RAB40B) complex. Without the ubiquitin signal, sorted to lysosomes for degradation.</text>
</comment>
<comment type="alternative products">
    <event type="alternative splicing"/>
    <isoform>
        <id>Q80ZJ1-1</id>
        <name>1</name>
        <sequence type="displayed"/>
    </isoform>
    <isoform>
        <id>Q80ZJ1-2</id>
        <name>2</name>
        <sequence type="described" ref="VSP_013381"/>
    </isoform>
</comment>
<comment type="tissue specificity">
    <text evidence="3">Expressed in granular layer of the cerebellum, forebrain, striatum, layer V of the cortex, olfactory cortex, tubercules, subthalamic and hippocampus, particularly in the CA2 region, to a lesser extent in the CA1 region and the external layer of the dentate gyrus. Expressed in neurons.</text>
</comment>
<comment type="domain">
    <text evidence="8">The effector domain mediates the interaction with RUNDC3A.</text>
</comment>
<comment type="PTM">
    <text evidence="2 7">Ubiquitinated; undergoes 'Lys-63' monoubiquitination and diubiquitination by NEDD4. Multiple lysine residues are probably modified. Ubiquitination requires TNIK, prevents interaction with effectors and inactivates RAP2A. Ubiquitination by the ECS(RAB40B) complex leads to RAP2A localization to lamellipodia plasma membrane, activation, and regulation of sorting at early endosomes for recycling to the lamellipodia plasma membrane (By similarity).</text>
</comment>
<comment type="PTM">
    <text evidence="6">Palmitoylated. Palmitoylation is required for association with recycling endosome membranes and activation of TNIK.</text>
</comment>
<comment type="miscellaneous">
    <text>Transgenic mice expressing a constitutively active form of Rap2a display impaired spatial learning and defective extinction of contextual fear.</text>
</comment>
<comment type="similarity">
    <text evidence="10">Belongs to the small GTPase superfamily. Ras family.</text>
</comment>
<accession>Q80ZJ1</accession>
<accession>Q3USK1</accession>
<accession>Q7TSK4</accession>
<accession>Q810A2</accession>
<accession>Q9D3D5</accession>
<evidence type="ECO:0000250" key="1"/>
<evidence type="ECO:0000250" key="2">
    <source>
        <dbReference type="UniProtKB" id="P10114"/>
    </source>
</evidence>
<evidence type="ECO:0000269" key="3">
    <source>
    </source>
</evidence>
<evidence type="ECO:0000269" key="4">
    <source>
    </source>
</evidence>
<evidence type="ECO:0000269" key="5">
    <source>
    </source>
</evidence>
<evidence type="ECO:0000269" key="6">
    <source>
    </source>
</evidence>
<evidence type="ECO:0000269" key="7">
    <source>
    </source>
</evidence>
<evidence type="ECO:0000269" key="8">
    <source>
    </source>
</evidence>
<evidence type="ECO:0000303" key="9">
    <source>
    </source>
</evidence>
<evidence type="ECO:0000305" key="10"/>
<evidence type="ECO:0000305" key="11">
    <source>
    </source>
</evidence>
<evidence type="ECO:0000312" key="12">
    <source>
        <dbReference type="MGI" id="MGI:97855"/>
    </source>
</evidence>
<protein>
    <recommendedName>
        <fullName>Ras-related protein Rap-2a</fullName>
        <ecNumber evidence="2">3.6.5.2</ecNumber>
    </recommendedName>
</protein>
<feature type="chain" id="PRO_0000082688" description="Ras-related protein Rap-2a">
    <location>
        <begin position="1"/>
        <end position="180"/>
    </location>
</feature>
<feature type="propeptide" id="PRO_0000281337" description="Removed in mature form" evidence="11">
    <location>
        <begin position="181"/>
        <end position="183"/>
    </location>
</feature>
<feature type="short sequence motif" description="Effector region">
    <location>
        <begin position="32"/>
        <end position="40"/>
    </location>
</feature>
<feature type="binding site" evidence="1">
    <location>
        <begin position="10"/>
        <end position="17"/>
    </location>
    <ligand>
        <name>GTP</name>
        <dbReference type="ChEBI" id="CHEBI:37565"/>
    </ligand>
</feature>
<feature type="binding site" evidence="1">
    <location>
        <begin position="57"/>
        <end position="61"/>
    </location>
    <ligand>
        <name>GTP</name>
        <dbReference type="ChEBI" id="CHEBI:37565"/>
    </ligand>
</feature>
<feature type="binding site" evidence="1">
    <location>
        <begin position="116"/>
        <end position="119"/>
    </location>
    <ligand>
        <name>GTP</name>
        <dbReference type="ChEBI" id="CHEBI:37565"/>
    </ligand>
</feature>
<feature type="modified residue" description="Cysteine methyl ester" evidence="11">
    <location>
        <position position="180"/>
    </location>
</feature>
<feature type="lipid moiety-binding region" description="S-palmitoyl cysteine" evidence="6">
    <location>
        <position position="176"/>
    </location>
</feature>
<feature type="lipid moiety-binding region" description="S-palmitoyl cysteine" evidence="6">
    <location>
        <position position="177"/>
    </location>
</feature>
<feature type="lipid moiety-binding region" description="S-farnesyl cysteine" evidence="6">
    <location>
        <position position="180"/>
    </location>
</feature>
<feature type="splice variant" id="VSP_013381" description="In isoform 2." evidence="9">
    <location>
        <begin position="106"/>
        <end position="183"/>
    </location>
</feature>
<feature type="mutagenesis site" description="Loss of affinity for GTP and loss of interaction with RUNDC3A." evidence="8">
    <original>S</original>
    <variation>N</variation>
    <location>
        <position position="17"/>
    </location>
</feature>
<feature type="mutagenesis site" description="Loss of interaction with RUNDC3A." evidence="8">
    <original>T</original>
    <variation>A</variation>
    <location>
        <position position="35"/>
    </location>
</feature>
<feature type="mutagenesis site" description="Loss of association with the recycling endosome membranes and loss of TNIK activation; when associated with C-177." evidence="6">
    <original>C</original>
    <variation>G</variation>
    <location>
        <position position="176"/>
    </location>
</feature>
<feature type="mutagenesis site" description="Loss of association with the recycling endosome membranes and loss of TNIK activation; when associated with C-176." evidence="6">
    <original>C</original>
    <variation>G</variation>
    <location>
        <position position="177"/>
    </location>
</feature>
<feature type="mutagenesis site" description="Loss of association with membranes." evidence="6">
    <original>C</original>
    <variation>A</variation>
    <location>
        <position position="180"/>
    </location>
</feature>
<gene>
    <name evidence="12" type="primary">Rap2a</name>
</gene>
<dbReference type="EC" id="3.6.5.2" evidence="2"/>
<dbReference type="EMBL" id="AK018024">
    <property type="protein sequence ID" value="BAB31042.1"/>
    <property type="molecule type" value="mRNA"/>
</dbReference>
<dbReference type="EMBL" id="AK140318">
    <property type="protein sequence ID" value="BAE24330.1"/>
    <property type="molecule type" value="mRNA"/>
</dbReference>
<dbReference type="EMBL" id="BC043066">
    <property type="protein sequence ID" value="AAH43066.2"/>
    <property type="molecule type" value="mRNA"/>
</dbReference>
<dbReference type="EMBL" id="BC049084">
    <property type="protein sequence ID" value="AAH49084.2"/>
    <property type="molecule type" value="mRNA"/>
</dbReference>
<dbReference type="EMBL" id="BC053003">
    <property type="protein sequence ID" value="AAH53003.1"/>
    <property type="molecule type" value="mRNA"/>
</dbReference>
<dbReference type="CCDS" id="CCDS27341.1">
    <molecule id="Q80ZJ1-1"/>
</dbReference>
<dbReference type="RefSeq" id="NP_083795.2">
    <molecule id="Q80ZJ1-1"/>
    <property type="nucleotide sequence ID" value="NM_029519.3"/>
</dbReference>
<dbReference type="SMR" id="Q80ZJ1"/>
<dbReference type="BioGRID" id="217966">
    <property type="interactions" value="7"/>
</dbReference>
<dbReference type="CORUM" id="Q80ZJ1"/>
<dbReference type="FunCoup" id="Q80ZJ1">
    <property type="interactions" value="1612"/>
</dbReference>
<dbReference type="IntAct" id="Q80ZJ1">
    <property type="interactions" value="2"/>
</dbReference>
<dbReference type="MINT" id="Q80ZJ1"/>
<dbReference type="STRING" id="10090.ENSMUSP00000056433"/>
<dbReference type="GlyGen" id="Q80ZJ1">
    <property type="glycosylation" value="1 site, 1 O-linked glycan (1 site)"/>
</dbReference>
<dbReference type="iPTMnet" id="Q80ZJ1"/>
<dbReference type="PhosphoSitePlus" id="Q80ZJ1"/>
<dbReference type="SwissPalm" id="Q80ZJ1"/>
<dbReference type="jPOST" id="Q80ZJ1"/>
<dbReference type="PaxDb" id="10090-ENSMUSP00000056433"/>
<dbReference type="PeptideAtlas" id="Q80ZJ1"/>
<dbReference type="ProteomicsDB" id="254981">
    <molecule id="Q80ZJ1-1"/>
</dbReference>
<dbReference type="Pumba" id="Q80ZJ1"/>
<dbReference type="Antibodypedia" id="10676">
    <property type="antibodies" value="140 antibodies from 27 providers"/>
</dbReference>
<dbReference type="DNASU" id="76108"/>
<dbReference type="Ensembl" id="ENSMUST00000062117.14">
    <molecule id="Q80ZJ1-1"/>
    <property type="protein sequence ID" value="ENSMUSP00000056433.7"/>
    <property type="gene ID" value="ENSMUSG00000051615.15"/>
</dbReference>
<dbReference type="GeneID" id="76108"/>
<dbReference type="KEGG" id="mmu:76108"/>
<dbReference type="UCSC" id="uc007uzx.1">
    <molecule id="Q80ZJ1-1"/>
    <property type="organism name" value="mouse"/>
</dbReference>
<dbReference type="AGR" id="MGI:97855"/>
<dbReference type="CTD" id="5911"/>
<dbReference type="MGI" id="MGI:97855">
    <property type="gene designation" value="Rap2a"/>
</dbReference>
<dbReference type="VEuPathDB" id="HostDB:ENSMUSG00000051615"/>
<dbReference type="eggNOG" id="KOG0395">
    <property type="taxonomic scope" value="Eukaryota"/>
</dbReference>
<dbReference type="GeneTree" id="ENSGT00940000160594"/>
<dbReference type="HOGENOM" id="CLU_041217_9_8_1"/>
<dbReference type="InParanoid" id="Q80ZJ1"/>
<dbReference type="OMA" id="MWGCPFV"/>
<dbReference type="OrthoDB" id="5976022at2759"/>
<dbReference type="PhylomeDB" id="Q80ZJ1"/>
<dbReference type="TreeFam" id="TF313014"/>
<dbReference type="BRENDA" id="3.6.5.2">
    <property type="organism ID" value="3474"/>
</dbReference>
<dbReference type="BioGRID-ORCS" id="76108">
    <property type="hits" value="3 hits in 79 CRISPR screens"/>
</dbReference>
<dbReference type="CD-CODE" id="CE726F99">
    <property type="entry name" value="Postsynaptic density"/>
</dbReference>
<dbReference type="ChiTaRS" id="Rap2a">
    <property type="organism name" value="mouse"/>
</dbReference>
<dbReference type="PRO" id="PR:Q80ZJ1"/>
<dbReference type="Proteomes" id="UP000000589">
    <property type="component" value="Chromosome 14"/>
</dbReference>
<dbReference type="RNAct" id="Q80ZJ1">
    <property type="molecule type" value="protein"/>
</dbReference>
<dbReference type="Bgee" id="ENSMUSG00000051615">
    <property type="expression patterns" value="Expressed in sciatic nerve and 241 other cell types or tissues"/>
</dbReference>
<dbReference type="GO" id="GO:0005829">
    <property type="term" value="C:cytosol"/>
    <property type="evidence" value="ECO:0000314"/>
    <property type="project" value="MGI"/>
</dbReference>
<dbReference type="GO" id="GO:0016020">
    <property type="term" value="C:membrane"/>
    <property type="evidence" value="ECO:0000314"/>
    <property type="project" value="MGI"/>
</dbReference>
<dbReference type="GO" id="GO:0030496">
    <property type="term" value="C:midbody"/>
    <property type="evidence" value="ECO:0007669"/>
    <property type="project" value="UniProtKB-SubCell"/>
</dbReference>
<dbReference type="GO" id="GO:0055037">
    <property type="term" value="C:recycling endosome"/>
    <property type="evidence" value="ECO:0000314"/>
    <property type="project" value="MGI"/>
</dbReference>
<dbReference type="GO" id="GO:0055038">
    <property type="term" value="C:recycling endosome membrane"/>
    <property type="evidence" value="ECO:0000314"/>
    <property type="project" value="UniProtKB"/>
</dbReference>
<dbReference type="GO" id="GO:0098685">
    <property type="term" value="C:Schaffer collateral - CA1 synapse"/>
    <property type="evidence" value="ECO:0007669"/>
    <property type="project" value="Ensembl"/>
</dbReference>
<dbReference type="GO" id="GO:0097060">
    <property type="term" value="C:synaptic membrane"/>
    <property type="evidence" value="ECO:0007669"/>
    <property type="project" value="Ensembl"/>
</dbReference>
<dbReference type="GO" id="GO:0003925">
    <property type="term" value="F:G protein activity"/>
    <property type="evidence" value="ECO:0007669"/>
    <property type="project" value="UniProtKB-EC"/>
</dbReference>
<dbReference type="GO" id="GO:0019003">
    <property type="term" value="F:GDP binding"/>
    <property type="evidence" value="ECO:0007669"/>
    <property type="project" value="Ensembl"/>
</dbReference>
<dbReference type="GO" id="GO:0005525">
    <property type="term" value="F:GTP binding"/>
    <property type="evidence" value="ECO:0007669"/>
    <property type="project" value="UniProtKB-KW"/>
</dbReference>
<dbReference type="GO" id="GO:0003924">
    <property type="term" value="F:GTPase activity"/>
    <property type="evidence" value="ECO:0000250"/>
    <property type="project" value="UniProtKB"/>
</dbReference>
<dbReference type="GO" id="GO:0000287">
    <property type="term" value="F:magnesium ion binding"/>
    <property type="evidence" value="ECO:0007669"/>
    <property type="project" value="Ensembl"/>
</dbReference>
<dbReference type="GO" id="GO:0030036">
    <property type="term" value="P:actin cytoskeleton organization"/>
    <property type="evidence" value="ECO:0000250"/>
    <property type="project" value="UniProtKB"/>
</dbReference>
<dbReference type="GO" id="GO:0071466">
    <property type="term" value="P:cellular response to xenobiotic stimulus"/>
    <property type="evidence" value="ECO:0007669"/>
    <property type="project" value="Ensembl"/>
</dbReference>
<dbReference type="GO" id="GO:0045184">
    <property type="term" value="P:establishment of protein localization"/>
    <property type="evidence" value="ECO:0000266"/>
    <property type="project" value="MGI"/>
</dbReference>
<dbReference type="GO" id="GO:0030033">
    <property type="term" value="P:microvillus assembly"/>
    <property type="evidence" value="ECO:0007669"/>
    <property type="project" value="Ensembl"/>
</dbReference>
<dbReference type="GO" id="GO:0030336">
    <property type="term" value="P:negative regulation of cell migration"/>
    <property type="evidence" value="ECO:0000314"/>
    <property type="project" value="MGI"/>
</dbReference>
<dbReference type="GO" id="GO:0008104">
    <property type="term" value="P:protein localization"/>
    <property type="evidence" value="ECO:0000250"/>
    <property type="project" value="UniProtKB"/>
</dbReference>
<dbReference type="GO" id="GO:0072659">
    <property type="term" value="P:protein localization to plasma membrane"/>
    <property type="evidence" value="ECO:0007669"/>
    <property type="project" value="Ensembl"/>
</dbReference>
<dbReference type="GO" id="GO:0032486">
    <property type="term" value="P:Rap protein signal transduction"/>
    <property type="evidence" value="ECO:0000314"/>
    <property type="project" value="UniProtKB"/>
</dbReference>
<dbReference type="GO" id="GO:0048814">
    <property type="term" value="P:regulation of dendrite morphogenesis"/>
    <property type="evidence" value="ECO:0000250"/>
    <property type="project" value="UniProtKB"/>
</dbReference>
<dbReference type="GO" id="GO:0046328">
    <property type="term" value="P:regulation of JNK cascade"/>
    <property type="evidence" value="ECO:0000250"/>
    <property type="project" value="UniProtKB"/>
</dbReference>
<dbReference type="GO" id="GO:0099072">
    <property type="term" value="P:regulation of postsynaptic membrane neurotransmitter receptor levels"/>
    <property type="evidence" value="ECO:0007669"/>
    <property type="project" value="Ensembl"/>
</dbReference>
<dbReference type="GO" id="GO:0051963">
    <property type="term" value="P:regulation of synapse assembly"/>
    <property type="evidence" value="ECO:0007669"/>
    <property type="project" value="Ensembl"/>
</dbReference>
<dbReference type="CDD" id="cd04176">
    <property type="entry name" value="Rap2"/>
    <property type="match status" value="1"/>
</dbReference>
<dbReference type="FunFam" id="3.40.50.300:FF:000189">
    <property type="entry name" value="Member of ras oncogene family"/>
    <property type="match status" value="1"/>
</dbReference>
<dbReference type="Gene3D" id="3.40.50.300">
    <property type="entry name" value="P-loop containing nucleotide triphosphate hydrolases"/>
    <property type="match status" value="1"/>
</dbReference>
<dbReference type="InterPro" id="IPR027417">
    <property type="entry name" value="P-loop_NTPase"/>
</dbReference>
<dbReference type="InterPro" id="IPR041840">
    <property type="entry name" value="Rap2"/>
</dbReference>
<dbReference type="InterPro" id="IPR005225">
    <property type="entry name" value="Small_GTP-bd"/>
</dbReference>
<dbReference type="InterPro" id="IPR001806">
    <property type="entry name" value="Small_GTPase"/>
</dbReference>
<dbReference type="InterPro" id="IPR020849">
    <property type="entry name" value="Small_GTPase_Ras-type"/>
</dbReference>
<dbReference type="NCBIfam" id="TIGR00231">
    <property type="entry name" value="small_GTP"/>
    <property type="match status" value="1"/>
</dbReference>
<dbReference type="PANTHER" id="PTHR24070">
    <property type="entry name" value="RAS, DI-RAS, AND RHEB FAMILY MEMBERS OF SMALL GTPASE SUPERFAMILY"/>
    <property type="match status" value="1"/>
</dbReference>
<dbReference type="Pfam" id="PF00071">
    <property type="entry name" value="Ras"/>
    <property type="match status" value="1"/>
</dbReference>
<dbReference type="PRINTS" id="PR00449">
    <property type="entry name" value="RASTRNSFRMNG"/>
</dbReference>
<dbReference type="SMART" id="SM00175">
    <property type="entry name" value="RAB"/>
    <property type="match status" value="1"/>
</dbReference>
<dbReference type="SMART" id="SM00176">
    <property type="entry name" value="RAN"/>
    <property type="match status" value="1"/>
</dbReference>
<dbReference type="SMART" id="SM00173">
    <property type="entry name" value="RAS"/>
    <property type="match status" value="1"/>
</dbReference>
<dbReference type="SMART" id="SM00174">
    <property type="entry name" value="RHO"/>
    <property type="match status" value="1"/>
</dbReference>
<dbReference type="SUPFAM" id="SSF52540">
    <property type="entry name" value="P-loop containing nucleoside triphosphate hydrolases"/>
    <property type="match status" value="1"/>
</dbReference>
<dbReference type="PROSITE" id="PS51421">
    <property type="entry name" value="RAS"/>
    <property type="match status" value="1"/>
</dbReference>
<name>RAP2A_MOUSE</name>